<feature type="chain" id="PRO_0000365858" description="ATP synthase subunit c">
    <location>
        <begin position="1"/>
        <end position="93"/>
    </location>
</feature>
<feature type="transmembrane region" description="Helical" evidence="1">
    <location>
        <begin position="13"/>
        <end position="33"/>
    </location>
</feature>
<feature type="transmembrane region" description="Helical" evidence="1">
    <location>
        <begin position="58"/>
        <end position="78"/>
    </location>
</feature>
<feature type="site" description="Reversibly protonated during proton transport" evidence="1">
    <location>
        <position position="64"/>
    </location>
</feature>
<dbReference type="EMBL" id="CP000776">
    <property type="protein sequence ID" value="ABS52027.1"/>
    <property type="molecule type" value="Genomic_DNA"/>
</dbReference>
<dbReference type="SMR" id="A7I137"/>
<dbReference type="STRING" id="360107.CHAB381_0646"/>
<dbReference type="KEGG" id="cha:CHAB381_0646"/>
<dbReference type="eggNOG" id="COG0636">
    <property type="taxonomic scope" value="Bacteria"/>
</dbReference>
<dbReference type="HOGENOM" id="CLU_148047_0_1_7"/>
<dbReference type="Proteomes" id="UP000002407">
    <property type="component" value="Chromosome"/>
</dbReference>
<dbReference type="GO" id="GO:0005886">
    <property type="term" value="C:plasma membrane"/>
    <property type="evidence" value="ECO:0007669"/>
    <property type="project" value="UniProtKB-SubCell"/>
</dbReference>
<dbReference type="GO" id="GO:0045259">
    <property type="term" value="C:proton-transporting ATP synthase complex"/>
    <property type="evidence" value="ECO:0007669"/>
    <property type="project" value="UniProtKB-KW"/>
</dbReference>
<dbReference type="GO" id="GO:0033177">
    <property type="term" value="C:proton-transporting two-sector ATPase complex, proton-transporting domain"/>
    <property type="evidence" value="ECO:0007669"/>
    <property type="project" value="InterPro"/>
</dbReference>
<dbReference type="GO" id="GO:0008289">
    <property type="term" value="F:lipid binding"/>
    <property type="evidence" value="ECO:0007669"/>
    <property type="project" value="UniProtKB-KW"/>
</dbReference>
<dbReference type="GO" id="GO:0046933">
    <property type="term" value="F:proton-transporting ATP synthase activity, rotational mechanism"/>
    <property type="evidence" value="ECO:0007669"/>
    <property type="project" value="UniProtKB-UniRule"/>
</dbReference>
<dbReference type="CDD" id="cd18121">
    <property type="entry name" value="ATP-synt_Fo_c"/>
    <property type="match status" value="1"/>
</dbReference>
<dbReference type="FunFam" id="1.20.20.10:FF:000002">
    <property type="entry name" value="ATP synthase subunit c"/>
    <property type="match status" value="1"/>
</dbReference>
<dbReference type="Gene3D" id="1.20.20.10">
    <property type="entry name" value="F1F0 ATP synthase subunit C"/>
    <property type="match status" value="1"/>
</dbReference>
<dbReference type="HAMAP" id="MF_01396">
    <property type="entry name" value="ATP_synth_c_bact"/>
    <property type="match status" value="1"/>
</dbReference>
<dbReference type="InterPro" id="IPR005953">
    <property type="entry name" value="ATP_synth_csu_bac/chlpt"/>
</dbReference>
<dbReference type="InterPro" id="IPR000454">
    <property type="entry name" value="ATP_synth_F0_csu"/>
</dbReference>
<dbReference type="InterPro" id="IPR020537">
    <property type="entry name" value="ATP_synth_F0_csu_DDCD_BS"/>
</dbReference>
<dbReference type="InterPro" id="IPR038662">
    <property type="entry name" value="ATP_synth_F0_csu_sf"/>
</dbReference>
<dbReference type="InterPro" id="IPR002379">
    <property type="entry name" value="ATPase_proteolipid_c-like_dom"/>
</dbReference>
<dbReference type="InterPro" id="IPR035921">
    <property type="entry name" value="F/V-ATP_Csub_sf"/>
</dbReference>
<dbReference type="NCBIfam" id="TIGR01260">
    <property type="entry name" value="ATP_synt_c"/>
    <property type="match status" value="1"/>
</dbReference>
<dbReference type="Pfam" id="PF00137">
    <property type="entry name" value="ATP-synt_C"/>
    <property type="match status" value="1"/>
</dbReference>
<dbReference type="PRINTS" id="PR00124">
    <property type="entry name" value="ATPASEC"/>
</dbReference>
<dbReference type="SUPFAM" id="SSF81333">
    <property type="entry name" value="F1F0 ATP synthase subunit C"/>
    <property type="match status" value="1"/>
</dbReference>
<dbReference type="PROSITE" id="PS00605">
    <property type="entry name" value="ATPASE_C"/>
    <property type="match status" value="1"/>
</dbReference>
<accession>A7I137</accession>
<evidence type="ECO:0000255" key="1">
    <source>
        <dbReference type="HAMAP-Rule" id="MF_01396"/>
    </source>
</evidence>
<gene>
    <name evidence="1" type="primary">atpE</name>
    <name type="ordered locus">CHAB381_0646</name>
</gene>
<name>ATPL_CAMHC</name>
<keyword id="KW-0066">ATP synthesis</keyword>
<keyword id="KW-0997">Cell inner membrane</keyword>
<keyword id="KW-1003">Cell membrane</keyword>
<keyword id="KW-0138">CF(0)</keyword>
<keyword id="KW-0375">Hydrogen ion transport</keyword>
<keyword id="KW-0406">Ion transport</keyword>
<keyword id="KW-0446">Lipid-binding</keyword>
<keyword id="KW-0472">Membrane</keyword>
<keyword id="KW-1185">Reference proteome</keyword>
<keyword id="KW-0812">Transmembrane</keyword>
<keyword id="KW-1133">Transmembrane helix</keyword>
<keyword id="KW-0813">Transport</keyword>
<sequence>MISIYAQIASFSAIGVGIAIGVAACGGGIGMGIAANATILGMARNPSISSKLTTTMYISLAMIEAQVIYALVIVFILLYANPLLTETIAAAAK</sequence>
<protein>
    <recommendedName>
        <fullName evidence="1">ATP synthase subunit c</fullName>
    </recommendedName>
    <alternativeName>
        <fullName evidence="1">ATP synthase F(0) sector subunit c</fullName>
    </alternativeName>
    <alternativeName>
        <fullName evidence="1">F-type ATPase subunit c</fullName>
        <shortName evidence="1">F-ATPase subunit c</shortName>
    </alternativeName>
    <alternativeName>
        <fullName evidence="1">Lipid-binding protein</fullName>
    </alternativeName>
</protein>
<comment type="function">
    <text evidence="1">F(1)F(0) ATP synthase produces ATP from ADP in the presence of a proton or sodium gradient. F-type ATPases consist of two structural domains, F(1) containing the extramembraneous catalytic core and F(0) containing the membrane proton channel, linked together by a central stalk and a peripheral stalk. During catalysis, ATP synthesis in the catalytic domain of F(1) is coupled via a rotary mechanism of the central stalk subunits to proton translocation.</text>
</comment>
<comment type="function">
    <text evidence="1">Key component of the F(0) channel; it plays a direct role in translocation across the membrane. A homomeric c-ring of between 10-14 subunits forms the central stalk rotor element with the F(1) delta and epsilon subunits.</text>
</comment>
<comment type="subunit">
    <text evidence="1">F-type ATPases have 2 components, F(1) - the catalytic core - and F(0) - the membrane proton channel. F(1) has five subunits: alpha(3), beta(3), gamma(1), delta(1), epsilon(1). F(0) has three main subunits: a(1), b(2) and c(10-14). The alpha and beta chains form an alternating ring which encloses part of the gamma chain. F(1) is attached to F(0) by a central stalk formed by the gamma and epsilon chains, while a peripheral stalk is formed by the delta and b chains.</text>
</comment>
<comment type="subcellular location">
    <subcellularLocation>
        <location evidence="1">Cell inner membrane</location>
        <topology evidence="1">Multi-pass membrane protein</topology>
    </subcellularLocation>
</comment>
<comment type="similarity">
    <text evidence="1">Belongs to the ATPase C chain family.</text>
</comment>
<reference key="1">
    <citation type="submission" date="2007-07" db="EMBL/GenBank/DDBJ databases">
        <title>Complete genome sequence of Campylobacter hominis ATCC BAA-381, a commensal isolated from the human gastrointestinal tract.</title>
        <authorList>
            <person name="Fouts D.E."/>
            <person name="Mongodin E.F."/>
            <person name="Puiu D."/>
            <person name="Sebastian Y."/>
            <person name="Miller W.G."/>
            <person name="Mandrell R.E."/>
            <person name="Nelson K.E."/>
        </authorList>
    </citation>
    <scope>NUCLEOTIDE SEQUENCE [LARGE SCALE GENOMIC DNA]</scope>
    <source>
        <strain>ATCC BAA-381 / DSM 21671 / CCUG 45161 / LMG 19568 / NCTC 13146 / CH001A</strain>
    </source>
</reference>
<proteinExistence type="inferred from homology"/>
<organism>
    <name type="scientific">Campylobacter hominis (strain ATCC BAA-381 / DSM 21671 / CCUG 45161 / LMG 19568 / NCTC 13146 / CH001A)</name>
    <dbReference type="NCBI Taxonomy" id="360107"/>
    <lineage>
        <taxon>Bacteria</taxon>
        <taxon>Pseudomonadati</taxon>
        <taxon>Campylobacterota</taxon>
        <taxon>Epsilonproteobacteria</taxon>
        <taxon>Campylobacterales</taxon>
        <taxon>Campylobacteraceae</taxon>
        <taxon>Campylobacter</taxon>
    </lineage>
</organism>